<protein>
    <recommendedName>
        <fullName evidence="1">ATP-dependent Clp protease proteolytic subunit 1</fullName>
        <ecNumber evidence="1">3.4.21.92</ecNumber>
    </recommendedName>
    <alternativeName>
        <fullName evidence="1">Endopeptidase Clp 1</fullName>
    </alternativeName>
</protein>
<feature type="chain" id="PRO_0000179545" description="ATP-dependent Clp protease proteolytic subunit 1">
    <location>
        <begin position="1"/>
        <end position="208"/>
    </location>
</feature>
<feature type="active site" description="Nucleophile" evidence="1">
    <location>
        <position position="108"/>
    </location>
</feature>
<feature type="active site" evidence="1">
    <location>
        <position position="133"/>
    </location>
</feature>
<gene>
    <name evidence="1" type="primary">clpP1</name>
    <name type="ordered locus">Cgl2411</name>
    <name type="ordered locus">cg2644</name>
</gene>
<evidence type="ECO:0000255" key="1">
    <source>
        <dbReference type="HAMAP-Rule" id="MF_00444"/>
    </source>
</evidence>
<comment type="function">
    <text evidence="1">Cleaves peptides in various proteins in a process that requires ATP hydrolysis. Has a chymotrypsin-like activity. Plays a major role in the degradation of misfolded proteins.</text>
</comment>
<comment type="catalytic activity">
    <reaction evidence="1">
        <text>Hydrolysis of proteins to small peptides in the presence of ATP and magnesium. alpha-casein is the usual test substrate. In the absence of ATP, only oligopeptides shorter than five residues are hydrolyzed (such as succinyl-Leu-Tyr-|-NHMec, and Leu-Tyr-Leu-|-Tyr-Trp, in which cleavage of the -Tyr-|-Leu- and -Tyr-|-Trp bonds also occurs).</text>
        <dbReference type="EC" id="3.4.21.92"/>
    </reaction>
</comment>
<comment type="subunit">
    <text evidence="1">Fourteen ClpP subunits assemble into 2 heptameric rings which stack back to back to give a disk-like structure with a central cavity, resembling the structure of eukaryotic proteasomes.</text>
</comment>
<comment type="subcellular location">
    <subcellularLocation>
        <location evidence="1">Cytoplasm</location>
    </subcellularLocation>
</comment>
<comment type="similarity">
    <text evidence="1">Belongs to the peptidase S14 family.</text>
</comment>
<accession>Q8NN02</accession>
<keyword id="KW-0963">Cytoplasm</keyword>
<keyword id="KW-0378">Hydrolase</keyword>
<keyword id="KW-0645">Protease</keyword>
<keyword id="KW-1185">Reference proteome</keyword>
<keyword id="KW-0720">Serine protease</keyword>
<dbReference type="EC" id="3.4.21.92" evidence="1"/>
<dbReference type="EMBL" id="BA000036">
    <property type="protein sequence ID" value="BAB99804.1"/>
    <property type="molecule type" value="Genomic_DNA"/>
</dbReference>
<dbReference type="EMBL" id="BX927155">
    <property type="protein sequence ID" value="CAF21075.1"/>
    <property type="molecule type" value="Genomic_DNA"/>
</dbReference>
<dbReference type="RefSeq" id="NP_601611.1">
    <property type="nucleotide sequence ID" value="NC_003450.3"/>
</dbReference>
<dbReference type="RefSeq" id="WP_003859221.1">
    <property type="nucleotide sequence ID" value="NC_006958.1"/>
</dbReference>
<dbReference type="SMR" id="Q8NN02"/>
<dbReference type="STRING" id="196627.cg2644"/>
<dbReference type="MEROPS" id="S14.009"/>
<dbReference type="KEGG" id="cgb:cg2644"/>
<dbReference type="KEGG" id="cgl:Cgl2411"/>
<dbReference type="PATRIC" id="fig|196627.13.peg.2345"/>
<dbReference type="eggNOG" id="COG0740">
    <property type="taxonomic scope" value="Bacteria"/>
</dbReference>
<dbReference type="HOGENOM" id="CLU_058707_3_2_11"/>
<dbReference type="OrthoDB" id="9802800at2"/>
<dbReference type="BioCyc" id="CORYNE:G18NG-12008-MONOMER"/>
<dbReference type="Proteomes" id="UP000000582">
    <property type="component" value="Chromosome"/>
</dbReference>
<dbReference type="Proteomes" id="UP000001009">
    <property type="component" value="Chromosome"/>
</dbReference>
<dbReference type="GO" id="GO:0005737">
    <property type="term" value="C:cytoplasm"/>
    <property type="evidence" value="ECO:0007669"/>
    <property type="project" value="UniProtKB-SubCell"/>
</dbReference>
<dbReference type="GO" id="GO:0009368">
    <property type="term" value="C:endopeptidase Clp complex"/>
    <property type="evidence" value="ECO:0007669"/>
    <property type="project" value="TreeGrafter"/>
</dbReference>
<dbReference type="GO" id="GO:0004176">
    <property type="term" value="F:ATP-dependent peptidase activity"/>
    <property type="evidence" value="ECO:0007669"/>
    <property type="project" value="InterPro"/>
</dbReference>
<dbReference type="GO" id="GO:0051117">
    <property type="term" value="F:ATPase binding"/>
    <property type="evidence" value="ECO:0007669"/>
    <property type="project" value="TreeGrafter"/>
</dbReference>
<dbReference type="GO" id="GO:0004252">
    <property type="term" value="F:serine-type endopeptidase activity"/>
    <property type="evidence" value="ECO:0007669"/>
    <property type="project" value="UniProtKB-UniRule"/>
</dbReference>
<dbReference type="GO" id="GO:0006515">
    <property type="term" value="P:protein quality control for misfolded or incompletely synthesized proteins"/>
    <property type="evidence" value="ECO:0007669"/>
    <property type="project" value="TreeGrafter"/>
</dbReference>
<dbReference type="CDD" id="cd07017">
    <property type="entry name" value="S14_ClpP_2"/>
    <property type="match status" value="1"/>
</dbReference>
<dbReference type="FunFam" id="3.90.226.10:FF:000002">
    <property type="entry name" value="ATP-dependent Clp protease proteolytic subunit"/>
    <property type="match status" value="1"/>
</dbReference>
<dbReference type="Gene3D" id="3.90.226.10">
    <property type="entry name" value="2-enoyl-CoA Hydratase, Chain A, domain 1"/>
    <property type="match status" value="1"/>
</dbReference>
<dbReference type="HAMAP" id="MF_00444">
    <property type="entry name" value="ClpP"/>
    <property type="match status" value="1"/>
</dbReference>
<dbReference type="InterPro" id="IPR001907">
    <property type="entry name" value="ClpP"/>
</dbReference>
<dbReference type="InterPro" id="IPR029045">
    <property type="entry name" value="ClpP/crotonase-like_dom_sf"/>
</dbReference>
<dbReference type="InterPro" id="IPR023562">
    <property type="entry name" value="ClpP/TepA"/>
</dbReference>
<dbReference type="InterPro" id="IPR033135">
    <property type="entry name" value="ClpP_His_AS"/>
</dbReference>
<dbReference type="InterPro" id="IPR018215">
    <property type="entry name" value="ClpP_Ser_AS"/>
</dbReference>
<dbReference type="NCBIfam" id="NF001368">
    <property type="entry name" value="PRK00277.1"/>
    <property type="match status" value="1"/>
</dbReference>
<dbReference type="NCBIfam" id="NF009205">
    <property type="entry name" value="PRK12553.1"/>
    <property type="match status" value="1"/>
</dbReference>
<dbReference type="PANTHER" id="PTHR10381">
    <property type="entry name" value="ATP-DEPENDENT CLP PROTEASE PROTEOLYTIC SUBUNIT"/>
    <property type="match status" value="1"/>
</dbReference>
<dbReference type="PANTHER" id="PTHR10381:SF26">
    <property type="entry name" value="ATP-DEPENDENT CLP PROTEASE PROTEOLYTIC SUBUNIT-LIKE-RELATED"/>
    <property type="match status" value="1"/>
</dbReference>
<dbReference type="Pfam" id="PF00574">
    <property type="entry name" value="CLP_protease"/>
    <property type="match status" value="1"/>
</dbReference>
<dbReference type="PRINTS" id="PR00127">
    <property type="entry name" value="CLPPROTEASEP"/>
</dbReference>
<dbReference type="SUPFAM" id="SSF52096">
    <property type="entry name" value="ClpP/crotonase"/>
    <property type="match status" value="1"/>
</dbReference>
<dbReference type="PROSITE" id="PS00382">
    <property type="entry name" value="CLP_PROTEASE_HIS"/>
    <property type="match status" value="1"/>
</dbReference>
<dbReference type="PROSITE" id="PS00381">
    <property type="entry name" value="CLP_PROTEASE_SER"/>
    <property type="match status" value="1"/>
</dbReference>
<name>CLPP1_CORGL</name>
<reference key="1">
    <citation type="journal article" date="2003" name="Appl. Microbiol. Biotechnol.">
        <title>The Corynebacterium glutamicum genome: features and impacts on biotechnological processes.</title>
        <authorList>
            <person name="Ikeda M."/>
            <person name="Nakagawa S."/>
        </authorList>
    </citation>
    <scope>NUCLEOTIDE SEQUENCE [LARGE SCALE GENOMIC DNA]</scope>
    <source>
        <strain>ATCC 13032 / DSM 20300 / JCM 1318 / BCRC 11384 / CCUG 27702 / LMG 3730 / NBRC 12168 / NCIMB 10025 / NRRL B-2784 / 534</strain>
    </source>
</reference>
<reference key="2">
    <citation type="journal article" date="2003" name="J. Biotechnol.">
        <title>The complete Corynebacterium glutamicum ATCC 13032 genome sequence and its impact on the production of L-aspartate-derived amino acids and vitamins.</title>
        <authorList>
            <person name="Kalinowski J."/>
            <person name="Bathe B."/>
            <person name="Bartels D."/>
            <person name="Bischoff N."/>
            <person name="Bott M."/>
            <person name="Burkovski A."/>
            <person name="Dusch N."/>
            <person name="Eggeling L."/>
            <person name="Eikmanns B.J."/>
            <person name="Gaigalat L."/>
            <person name="Goesmann A."/>
            <person name="Hartmann M."/>
            <person name="Huthmacher K."/>
            <person name="Kraemer R."/>
            <person name="Linke B."/>
            <person name="McHardy A.C."/>
            <person name="Meyer F."/>
            <person name="Moeckel B."/>
            <person name="Pfefferle W."/>
            <person name="Puehler A."/>
            <person name="Rey D.A."/>
            <person name="Rueckert C."/>
            <person name="Rupp O."/>
            <person name="Sahm H."/>
            <person name="Wendisch V.F."/>
            <person name="Wiegraebe I."/>
            <person name="Tauch A."/>
        </authorList>
    </citation>
    <scope>NUCLEOTIDE SEQUENCE [LARGE SCALE GENOMIC DNA]</scope>
    <source>
        <strain>ATCC 13032 / DSM 20300 / JCM 1318 / BCRC 11384 / CCUG 27702 / LMG 3730 / NBRC 12168 / NCIMB 10025 / NRRL B-2784 / 534</strain>
    </source>
</reference>
<organism>
    <name type="scientific">Corynebacterium glutamicum (strain ATCC 13032 / DSM 20300 / JCM 1318 / BCRC 11384 / CCUG 27702 / LMG 3730 / NBRC 12168 / NCIMB 10025 / NRRL B-2784 / 534)</name>
    <dbReference type="NCBI Taxonomy" id="196627"/>
    <lineage>
        <taxon>Bacteria</taxon>
        <taxon>Bacillati</taxon>
        <taxon>Actinomycetota</taxon>
        <taxon>Actinomycetes</taxon>
        <taxon>Mycobacteriales</taxon>
        <taxon>Corynebacteriaceae</taxon>
        <taxon>Corynebacterium</taxon>
    </lineage>
</organism>
<sequence>MSNGFQMPTSRYVLPSFIEQSAYGTKETNPYAKLFEERIIFLGTQVDDTSANDIMAQLLVLEGMDPDRDITLYINSPGGSFTALMAIYDTMQYVRPDVQTVCLGQAASAAAVLLAAGAPGKRAVLPNSRVLIHQPATQGTQGQVSDLEIQAAEIERMRRLMETTLAEHTGKTAEQIRIDTDRDKILTAEEALEYGIVDQVFDYRKLKR</sequence>
<proteinExistence type="inferred from homology"/>